<feature type="chain" id="PRO_0000301150" description="Sec-independent protein translocase protein TatB">
    <location>
        <begin position="1"/>
        <end position="179"/>
    </location>
</feature>
<feature type="transmembrane region" description="Helical" evidence="1">
    <location>
        <begin position="1"/>
        <end position="21"/>
    </location>
</feature>
<feature type="region of interest" description="Disordered" evidence="2">
    <location>
        <begin position="101"/>
        <end position="134"/>
    </location>
</feature>
<feature type="compositionally biased region" description="Low complexity" evidence="2">
    <location>
        <begin position="101"/>
        <end position="115"/>
    </location>
</feature>
<comment type="function">
    <text evidence="1">Part of the twin-arginine translocation (Tat) system that transports large folded proteins containing a characteristic twin-arginine motif in their signal peptide across membranes. Together with TatC, TatB is part of a receptor directly interacting with Tat signal peptides. TatB may form an oligomeric binding site that transiently accommodates folded Tat precursor proteins before their translocation.</text>
</comment>
<comment type="subunit">
    <text evidence="1">The Tat system comprises two distinct complexes: a TatABC complex, containing multiple copies of TatA, TatB and TatC subunits, and a separate TatA complex, containing only TatA subunits. Substrates initially bind to the TatABC complex, which probably triggers association of the separate TatA complex to form the active translocon.</text>
</comment>
<comment type="subcellular location">
    <subcellularLocation>
        <location evidence="1">Cell inner membrane</location>
        <topology evidence="1">Single-pass membrane protein</topology>
    </subcellularLocation>
</comment>
<comment type="similarity">
    <text evidence="1">Belongs to the TatB family.</text>
</comment>
<dbReference type="EMBL" id="CP000458">
    <property type="protein sequence ID" value="ABK07191.1"/>
    <property type="molecule type" value="Genomic_DNA"/>
</dbReference>
<dbReference type="RefSeq" id="WP_006477114.1">
    <property type="nucleotide sequence ID" value="NC_008542.1"/>
</dbReference>
<dbReference type="SMR" id="A0K3W4"/>
<dbReference type="GeneID" id="83047219"/>
<dbReference type="KEGG" id="bch:Bcen2424_0437"/>
<dbReference type="HOGENOM" id="CLU_086034_1_1_4"/>
<dbReference type="GO" id="GO:0033281">
    <property type="term" value="C:TAT protein transport complex"/>
    <property type="evidence" value="ECO:0007669"/>
    <property type="project" value="UniProtKB-UniRule"/>
</dbReference>
<dbReference type="GO" id="GO:0008320">
    <property type="term" value="F:protein transmembrane transporter activity"/>
    <property type="evidence" value="ECO:0007669"/>
    <property type="project" value="UniProtKB-UniRule"/>
</dbReference>
<dbReference type="GO" id="GO:0043953">
    <property type="term" value="P:protein transport by the Tat complex"/>
    <property type="evidence" value="ECO:0007669"/>
    <property type="project" value="UniProtKB-UniRule"/>
</dbReference>
<dbReference type="Gene3D" id="1.20.5.3310">
    <property type="match status" value="1"/>
</dbReference>
<dbReference type="HAMAP" id="MF_00237">
    <property type="entry name" value="TatB"/>
    <property type="match status" value="1"/>
</dbReference>
<dbReference type="InterPro" id="IPR003369">
    <property type="entry name" value="TatA/B/E"/>
</dbReference>
<dbReference type="InterPro" id="IPR018448">
    <property type="entry name" value="TatB"/>
</dbReference>
<dbReference type="NCBIfam" id="TIGR01410">
    <property type="entry name" value="tatB"/>
    <property type="match status" value="1"/>
</dbReference>
<dbReference type="PANTHER" id="PTHR33162">
    <property type="entry name" value="SEC-INDEPENDENT PROTEIN TRANSLOCASE PROTEIN TATA, CHLOROPLASTIC"/>
    <property type="match status" value="1"/>
</dbReference>
<dbReference type="PANTHER" id="PTHR33162:SF1">
    <property type="entry name" value="SEC-INDEPENDENT PROTEIN TRANSLOCASE PROTEIN TATA, CHLOROPLASTIC"/>
    <property type="match status" value="1"/>
</dbReference>
<dbReference type="Pfam" id="PF02416">
    <property type="entry name" value="TatA_B_E"/>
    <property type="match status" value="1"/>
</dbReference>
<dbReference type="PRINTS" id="PR01506">
    <property type="entry name" value="TATBPROTEIN"/>
</dbReference>
<organism>
    <name type="scientific">Burkholderia cenocepacia (strain HI2424)</name>
    <dbReference type="NCBI Taxonomy" id="331272"/>
    <lineage>
        <taxon>Bacteria</taxon>
        <taxon>Pseudomonadati</taxon>
        <taxon>Pseudomonadota</taxon>
        <taxon>Betaproteobacteria</taxon>
        <taxon>Burkholderiales</taxon>
        <taxon>Burkholderiaceae</taxon>
        <taxon>Burkholderia</taxon>
        <taxon>Burkholderia cepacia complex</taxon>
    </lineage>
</organism>
<keyword id="KW-0997">Cell inner membrane</keyword>
<keyword id="KW-1003">Cell membrane</keyword>
<keyword id="KW-0472">Membrane</keyword>
<keyword id="KW-0653">Protein transport</keyword>
<keyword id="KW-0811">Translocation</keyword>
<keyword id="KW-0812">Transmembrane</keyword>
<keyword id="KW-1133">Transmembrane helix</keyword>
<keyword id="KW-0813">Transport</keyword>
<reference key="1">
    <citation type="submission" date="2006-08" db="EMBL/GenBank/DDBJ databases">
        <title>Complete sequence of chromosome 1 of Burkholderia cenocepacia HI2424.</title>
        <authorList>
            <person name="Copeland A."/>
            <person name="Lucas S."/>
            <person name="Lapidus A."/>
            <person name="Barry K."/>
            <person name="Detter J.C."/>
            <person name="Glavina del Rio T."/>
            <person name="Hammon N."/>
            <person name="Israni S."/>
            <person name="Pitluck S."/>
            <person name="Chain P."/>
            <person name="Malfatti S."/>
            <person name="Shin M."/>
            <person name="Vergez L."/>
            <person name="Schmutz J."/>
            <person name="Larimer F."/>
            <person name="Land M."/>
            <person name="Hauser L."/>
            <person name="Kyrpides N."/>
            <person name="Kim E."/>
            <person name="LiPuma J.J."/>
            <person name="Gonzalez C.F."/>
            <person name="Konstantinidis K."/>
            <person name="Tiedje J.M."/>
            <person name="Richardson P."/>
        </authorList>
    </citation>
    <scope>NUCLEOTIDE SEQUENCE [LARGE SCALE GENOMIC DNA]</scope>
    <source>
        <strain>HI2424</strain>
    </source>
</reference>
<sequence>MLDLGLSKMALIGVVALVVLGPERLPRVARTAGALFGRAQRYINDVKAEVSREIELDALRTMKTDFESAARNVETTIHDNLREHEKELNDTWHSAVGGLDGAAGDAGSVGSPGSDTPAAPSWRGSSAALAPKRRNWRIKQAATPVWYKRATTRRTHVQSGAARVARHQPASLRRPTRFF</sequence>
<name>TATB_BURCH</name>
<evidence type="ECO:0000255" key="1">
    <source>
        <dbReference type="HAMAP-Rule" id="MF_00237"/>
    </source>
</evidence>
<evidence type="ECO:0000256" key="2">
    <source>
        <dbReference type="SAM" id="MobiDB-lite"/>
    </source>
</evidence>
<proteinExistence type="inferred from homology"/>
<gene>
    <name evidence="1" type="primary">tatB</name>
    <name type="ordered locus">Bcen2424_0437</name>
</gene>
<protein>
    <recommendedName>
        <fullName evidence="1">Sec-independent protein translocase protein TatB</fullName>
    </recommendedName>
</protein>
<accession>A0K3W4</accession>